<gene>
    <name evidence="5" type="primary">MAF1a1</name>
    <name evidence="5" type="synonym">MAF1</name>
    <name evidence="7" type="ORF">TGME49_279100</name>
</gene>
<protein>
    <recommendedName>
        <fullName evidence="5">Mitochondrial association factor 1 form a1</fullName>
        <shortName evidence="5">MAF1ME49a1 allele</shortName>
    </recommendedName>
</protein>
<dbReference type="EMBL" id="KE138816">
    <property type="protein sequence ID" value="EPT31950.1"/>
    <property type="molecule type" value="Genomic_DNA"/>
</dbReference>
<dbReference type="RefSeq" id="XP_018638253.1">
    <property type="nucleotide sequence ID" value="XM_018781832.1"/>
</dbReference>
<dbReference type="SMR" id="S8GJB7"/>
<dbReference type="SwissPalm" id="S8GJB7"/>
<dbReference type="EnsemblProtists" id="TGME49_279100-t26_1">
    <property type="protein sequence ID" value="TGME49_279100-t26_1"/>
    <property type="gene ID" value="TGME49_279100"/>
</dbReference>
<dbReference type="GeneID" id="29769515"/>
<dbReference type="KEGG" id="tgo:TGME49_279100"/>
<dbReference type="VEuPathDB" id="ToxoDB:TGME49_279100"/>
<dbReference type="HOGENOM" id="CLU_051602_0_0_1"/>
<dbReference type="OrthoDB" id="447602at2759"/>
<dbReference type="PhylomeDB" id="S8GJB7"/>
<dbReference type="Proteomes" id="UP000001529">
    <property type="component" value="Chromosome II"/>
</dbReference>
<dbReference type="GO" id="GO:0016020">
    <property type="term" value="C:membrane"/>
    <property type="evidence" value="ECO:0007669"/>
    <property type="project" value="UniProtKB-KW"/>
</dbReference>
<dbReference type="GO" id="GO:0020005">
    <property type="term" value="C:symbiont-containing vacuole membrane"/>
    <property type="evidence" value="ECO:0007669"/>
    <property type="project" value="UniProtKB-SubCell"/>
</dbReference>
<dbReference type="CDD" id="cd21101">
    <property type="entry name" value="MAF1-ALBA4_C"/>
    <property type="match status" value="1"/>
</dbReference>
<proteinExistence type="evidence at protein level"/>
<keyword id="KW-0472">Membrane</keyword>
<keyword id="KW-1185">Reference proteome</keyword>
<keyword id="KW-0732">Signal</keyword>
<keyword id="KW-1137">Tachyzoite</keyword>
<keyword id="KW-0812">Transmembrane</keyword>
<keyword id="KW-1133">Transmembrane helix</keyword>
<feature type="signal peptide" evidence="2">
    <location>
        <begin position="1"/>
        <end position="20"/>
    </location>
</feature>
<feature type="chain" id="PRO_5004551867" description="Mitochondrial association factor 1 form a1" evidence="2">
    <location>
        <begin position="21"/>
        <end position="435"/>
    </location>
</feature>
<feature type="topological domain" description="Vacuolar" evidence="6">
    <location>
        <begin position="21"/>
        <end position="96"/>
    </location>
</feature>
<feature type="transmembrane region" description="Helical" evidence="2">
    <location>
        <begin position="97"/>
        <end position="117"/>
    </location>
</feature>
<feature type="topological domain" description="Cytoplasmic" evidence="6">
    <location>
        <begin position="118"/>
        <end position="435"/>
    </location>
</feature>
<feature type="region of interest" description="Disordered" evidence="3">
    <location>
        <begin position="120"/>
        <end position="159"/>
    </location>
</feature>
<accession>S8GJB7</accession>
<evidence type="ECO:0000250" key="1">
    <source>
        <dbReference type="UniProtKB" id="A0A193AUK9"/>
    </source>
</evidence>
<evidence type="ECO:0000255" key="2"/>
<evidence type="ECO:0000256" key="3">
    <source>
        <dbReference type="SAM" id="MobiDB-lite"/>
    </source>
</evidence>
<evidence type="ECO:0000269" key="4">
    <source>
    </source>
</evidence>
<evidence type="ECO:0000303" key="5">
    <source>
    </source>
</evidence>
<evidence type="ECO:0000305" key="6"/>
<evidence type="ECO:0000312" key="7">
    <source>
        <dbReference type="EMBL" id="EPT31950.1"/>
    </source>
</evidence>
<evidence type="ECO:0000312" key="8">
    <source>
        <dbReference type="Proteomes" id="UP000001529"/>
    </source>
</evidence>
<name>MAFA1_TOXGM</name>
<organism evidence="8">
    <name type="scientific">Toxoplasma gondii (strain ATCC 50611 / Me49)</name>
    <dbReference type="NCBI Taxonomy" id="508771"/>
    <lineage>
        <taxon>Eukaryota</taxon>
        <taxon>Sar</taxon>
        <taxon>Alveolata</taxon>
        <taxon>Apicomplexa</taxon>
        <taxon>Conoidasida</taxon>
        <taxon>Coccidia</taxon>
        <taxon>Eucoccidiorida</taxon>
        <taxon>Eimeriorina</taxon>
        <taxon>Sarcocystidae</taxon>
        <taxon>Toxoplasma</taxon>
    </lineage>
</organism>
<comment type="function">
    <text evidence="4">During host cell infection by tachyzoites, does not play a role in tethering the parasitophorous vacuole to the host mitochondria, probably because it does not bind host mitochondrial import protein TOMM70.</text>
</comment>
<comment type="subunit">
    <text evidence="1">Interacts with host SAMM50.</text>
</comment>
<comment type="subcellular location">
    <subcellularLocation>
        <location evidence="4">Parasitophorous vacuole membrane</location>
        <topology evidence="6">Single-pass type I membrane protein</topology>
    </subcellularLocation>
</comment>
<comment type="developmental stage">
    <text evidence="4">Expressed in tachyzoites (at protein level).</text>
</comment>
<comment type="polymorphism">
    <text evidence="4">The MAF1 locus encodes multiple tandemly duplicated paralogs that vary in expression, sequence and copy number across T.gondii strains (PubMed:26920761). For instance, type I strain GT1 has 6 copies, type I strain RH has 4 copies, type II strains ME49 and PRU have 4 copies, type III strain VEG has 4 copies and type III strain CTG has only 2 copies (PubMed:26920761). The paralogs are classified into two groups, a and b and have probably arisen from the neofunctionalization of an ancestral MAF1 a gene (PubMed:26920761). They are characterized by the presence or absence of a repetitive stretch of 4 to 7 prolines followed by a serine (P(4:7)S), as well as differences in the amino acids surrounding the proline motif (PubMed:26920761). This motif is either completely missing (a and b0 paralogs) or repeated up to six times (b paralogs) (PubMed:26920761). Across the strains, transcript levels for the a paralogs are similar, however, in type II strain ME49, transcript levels for the b paralogs are low and no paralog MAF1 b1 protein is produced (PubMed:26920761). Paralogs differ in their ability to mediate host mitochondrial association (HMA), but also in their ability to confer a selective advantage during infection in a mouse model (PubMed:26920761). Tachyzoites from type I and III strains associate with host mitochondria (HMA(+)), while tachyzoites from type II strains, such as ME49, do not associate with host mitochondria (HMA(-)) due to a lack of MAF1 b1 expression (PubMed:26920761).</text>
</comment>
<reference evidence="8" key="1">
    <citation type="submission" date="2013-04" db="EMBL/GenBank/DDBJ databases">
        <authorList>
            <person name="Sibley D."/>
            <person name="Venepally P."/>
            <person name="Karamycheva S."/>
            <person name="Hadjithomas M."/>
            <person name="Khan A."/>
            <person name="Brunk B."/>
            <person name="Roos D."/>
            <person name="Caler E."/>
            <person name="Lorenzi H."/>
        </authorList>
    </citation>
    <scope>NUCLEOTIDE SEQUENCE [LARGE SCALE GENOMIC DNA]</scope>
    <source>
        <strain evidence="8">ATCC 50611 / Me49</strain>
    </source>
</reference>
<reference evidence="6" key="2">
    <citation type="journal article" date="2016" name="Genetics">
        <title>Host Mitochondrial Association Evolved in the Human Parasite Toxoplasma gondii via Neofunctionalization of a Gene Duplicate.</title>
        <authorList>
            <person name="Adomako-Ankomah Y."/>
            <person name="English E.D."/>
            <person name="Danielson J.J."/>
            <person name="Pernas L.F."/>
            <person name="Parker M.L."/>
            <person name="Boulanger M.J."/>
            <person name="Dubey J.P."/>
            <person name="Boyle J.P."/>
        </authorList>
    </citation>
    <scope>NOMENCLATURE</scope>
    <scope>FUNCTION</scope>
    <scope>SUBCELLULAR LOCATION</scope>
    <scope>DEVELOPMENTAL STAGE</scope>
    <scope>POLYMORPHISM</scope>
    <source>
        <strain evidence="4">ATCC 50611 / Me49</strain>
    </source>
</reference>
<sequence>MWRIWRCRLSFLFATGCLLGALTAGLGSQMSDSVGRNVQAPAGVADASQEAGDVVEERTERTEQQVFALGPPRRHSSESLFPRNASVTARRRRNRRIALIATAVGVAVILAALYVLRRRRAQPPQEPEPPTRLRTPRPRAPSGQQQPSESEPPAGVPMTPGFLTLPFTCLRDTKVTFFGPSGRQHGFTALYDPSPNKRVATVDAGTNRLFIGGGGMNGEFANTIIEEARRNRIPLTATELSAESQEIQERLLRDAERRPGTLVEIDSGRFSRVFARSFAYVAIVPNTVWDESETGKNVGATFLHILKPEVTPHGNQMNDVMLYTVAPLGNASDSAYNLAYKATMLGIVGAVSEYNKTPWGEVKPVEAIRLPLLGAGHFRGRRGLHSIGRANAVAVEAAITRFDPRVELQFMYEPSDAALRGLMESERTYTFPQGD</sequence>